<protein>
    <recommendedName>
        <fullName>Probable E3 ubiquitin-protein ligase HIP1</fullName>
        <ecNumber>2.3.2.27</ecNumber>
    </recommendedName>
    <alternativeName>
        <fullName>HAL3-interacting protein 1</fullName>
        <shortName>OsHIP1</shortName>
    </alternativeName>
    <alternativeName>
        <fullName>RING-H2 finger HIP1</fullName>
    </alternativeName>
    <alternativeName>
        <fullName evidence="5">RING-type E3 ubiquitin transferase HIP1</fullName>
    </alternativeName>
</protein>
<reference key="1">
    <citation type="journal article" date="2002" name="Nature">
        <title>Sequence and analysis of rice chromosome 4.</title>
        <authorList>
            <person name="Feng Q."/>
            <person name="Zhang Y."/>
            <person name="Hao P."/>
            <person name="Wang S."/>
            <person name="Fu G."/>
            <person name="Huang Y."/>
            <person name="Li Y."/>
            <person name="Zhu J."/>
            <person name="Liu Y."/>
            <person name="Hu X."/>
            <person name="Jia P."/>
            <person name="Zhang Y."/>
            <person name="Zhao Q."/>
            <person name="Ying K."/>
            <person name="Yu S."/>
            <person name="Tang Y."/>
            <person name="Weng Q."/>
            <person name="Zhang L."/>
            <person name="Lu Y."/>
            <person name="Mu J."/>
            <person name="Lu Y."/>
            <person name="Zhang L.S."/>
            <person name="Yu Z."/>
            <person name="Fan D."/>
            <person name="Liu X."/>
            <person name="Lu T."/>
            <person name="Li C."/>
            <person name="Wu Y."/>
            <person name="Sun T."/>
            <person name="Lei H."/>
            <person name="Li T."/>
            <person name="Hu H."/>
            <person name="Guan J."/>
            <person name="Wu M."/>
            <person name="Zhang R."/>
            <person name="Zhou B."/>
            <person name="Chen Z."/>
            <person name="Chen L."/>
            <person name="Jin Z."/>
            <person name="Wang R."/>
            <person name="Yin H."/>
            <person name="Cai Z."/>
            <person name="Ren S."/>
            <person name="Lv G."/>
            <person name="Gu W."/>
            <person name="Zhu G."/>
            <person name="Tu Y."/>
            <person name="Jia J."/>
            <person name="Zhang Y."/>
            <person name="Chen J."/>
            <person name="Kang H."/>
            <person name="Chen X."/>
            <person name="Shao C."/>
            <person name="Sun Y."/>
            <person name="Hu Q."/>
            <person name="Zhang X."/>
            <person name="Zhang W."/>
            <person name="Wang L."/>
            <person name="Ding C."/>
            <person name="Sheng H."/>
            <person name="Gu J."/>
            <person name="Chen S."/>
            <person name="Ni L."/>
            <person name="Zhu F."/>
            <person name="Chen W."/>
            <person name="Lan L."/>
            <person name="Lai Y."/>
            <person name="Cheng Z."/>
            <person name="Gu M."/>
            <person name="Jiang J."/>
            <person name="Li J."/>
            <person name="Hong G."/>
            <person name="Xue Y."/>
            <person name="Han B."/>
        </authorList>
    </citation>
    <scope>NUCLEOTIDE SEQUENCE [LARGE SCALE GENOMIC DNA]</scope>
    <source>
        <strain>cv. Nipponbare</strain>
    </source>
</reference>
<reference key="2">
    <citation type="journal article" date="2005" name="Nature">
        <title>The map-based sequence of the rice genome.</title>
        <authorList>
            <consortium name="International rice genome sequencing project (IRGSP)"/>
        </authorList>
    </citation>
    <scope>NUCLEOTIDE SEQUENCE [LARGE SCALE GENOMIC DNA]</scope>
    <source>
        <strain>cv. Nipponbare</strain>
    </source>
</reference>
<reference key="3">
    <citation type="journal article" date="2008" name="Nucleic Acids Res.">
        <title>The rice annotation project database (RAP-DB): 2008 update.</title>
        <authorList>
            <consortium name="The rice annotation project (RAP)"/>
        </authorList>
    </citation>
    <scope>GENOME REANNOTATION</scope>
    <source>
        <strain>cv. Nipponbare</strain>
    </source>
</reference>
<reference key="4">
    <citation type="journal article" date="2013" name="Rice">
        <title>Improvement of the Oryza sativa Nipponbare reference genome using next generation sequence and optical map data.</title>
        <authorList>
            <person name="Kawahara Y."/>
            <person name="de la Bastide M."/>
            <person name="Hamilton J.P."/>
            <person name="Kanamori H."/>
            <person name="McCombie W.R."/>
            <person name="Ouyang S."/>
            <person name="Schwartz D.C."/>
            <person name="Tanaka T."/>
            <person name="Wu J."/>
            <person name="Zhou S."/>
            <person name="Childs K.L."/>
            <person name="Davidson R.M."/>
            <person name="Lin H."/>
            <person name="Quesada-Ocampo L."/>
            <person name="Vaillancourt B."/>
            <person name="Sakai H."/>
            <person name="Lee S.S."/>
            <person name="Kim J."/>
            <person name="Numa H."/>
            <person name="Itoh T."/>
            <person name="Buell C.R."/>
            <person name="Matsumoto T."/>
        </authorList>
    </citation>
    <scope>GENOME REANNOTATION</scope>
    <source>
        <strain>cv. Nipponbare</strain>
    </source>
</reference>
<reference key="5">
    <citation type="journal article" date="2005" name="PLoS Biol.">
        <title>The genomes of Oryza sativa: a history of duplications.</title>
        <authorList>
            <person name="Yu J."/>
            <person name="Wang J."/>
            <person name="Lin W."/>
            <person name="Li S."/>
            <person name="Li H."/>
            <person name="Zhou J."/>
            <person name="Ni P."/>
            <person name="Dong W."/>
            <person name="Hu S."/>
            <person name="Zeng C."/>
            <person name="Zhang J."/>
            <person name="Zhang Y."/>
            <person name="Li R."/>
            <person name="Xu Z."/>
            <person name="Li S."/>
            <person name="Li X."/>
            <person name="Zheng H."/>
            <person name="Cong L."/>
            <person name="Lin L."/>
            <person name="Yin J."/>
            <person name="Geng J."/>
            <person name="Li G."/>
            <person name="Shi J."/>
            <person name="Liu J."/>
            <person name="Lv H."/>
            <person name="Li J."/>
            <person name="Wang J."/>
            <person name="Deng Y."/>
            <person name="Ran L."/>
            <person name="Shi X."/>
            <person name="Wang X."/>
            <person name="Wu Q."/>
            <person name="Li C."/>
            <person name="Ren X."/>
            <person name="Wang J."/>
            <person name="Wang X."/>
            <person name="Li D."/>
            <person name="Liu D."/>
            <person name="Zhang X."/>
            <person name="Ji Z."/>
            <person name="Zhao W."/>
            <person name="Sun Y."/>
            <person name="Zhang Z."/>
            <person name="Bao J."/>
            <person name="Han Y."/>
            <person name="Dong L."/>
            <person name="Ji J."/>
            <person name="Chen P."/>
            <person name="Wu S."/>
            <person name="Liu J."/>
            <person name="Xiao Y."/>
            <person name="Bu D."/>
            <person name="Tan J."/>
            <person name="Yang L."/>
            <person name="Ye C."/>
            <person name="Zhang J."/>
            <person name="Xu J."/>
            <person name="Zhou Y."/>
            <person name="Yu Y."/>
            <person name="Zhang B."/>
            <person name="Zhuang S."/>
            <person name="Wei H."/>
            <person name="Liu B."/>
            <person name="Lei M."/>
            <person name="Yu H."/>
            <person name="Li Y."/>
            <person name="Xu H."/>
            <person name="Wei S."/>
            <person name="He X."/>
            <person name="Fang L."/>
            <person name="Zhang Z."/>
            <person name="Zhang Y."/>
            <person name="Huang X."/>
            <person name="Su Z."/>
            <person name="Tong W."/>
            <person name="Li J."/>
            <person name="Tong Z."/>
            <person name="Li S."/>
            <person name="Ye J."/>
            <person name="Wang L."/>
            <person name="Fang L."/>
            <person name="Lei T."/>
            <person name="Chen C.-S."/>
            <person name="Chen H.-C."/>
            <person name="Xu Z."/>
            <person name="Li H."/>
            <person name="Huang H."/>
            <person name="Zhang F."/>
            <person name="Xu H."/>
            <person name="Li N."/>
            <person name="Zhao C."/>
            <person name="Li S."/>
            <person name="Dong L."/>
            <person name="Huang Y."/>
            <person name="Li L."/>
            <person name="Xi Y."/>
            <person name="Qi Q."/>
            <person name="Li W."/>
            <person name="Zhang B."/>
            <person name="Hu W."/>
            <person name="Zhang Y."/>
            <person name="Tian X."/>
            <person name="Jiao Y."/>
            <person name="Liang X."/>
            <person name="Jin J."/>
            <person name="Gao L."/>
            <person name="Zheng W."/>
            <person name="Hao B."/>
            <person name="Liu S.-M."/>
            <person name="Wang W."/>
            <person name="Yuan L."/>
            <person name="Cao M."/>
            <person name="McDermott J."/>
            <person name="Samudrala R."/>
            <person name="Wang J."/>
            <person name="Wong G.K.-S."/>
            <person name="Yang H."/>
        </authorList>
    </citation>
    <scope>NUCLEOTIDE SEQUENCE [LARGE SCALE GENOMIC DNA]</scope>
    <source>
        <strain>cv. Nipponbare</strain>
    </source>
</reference>
<reference key="6">
    <citation type="journal article" date="2003" name="Science">
        <title>Collection, mapping, and annotation of over 28,000 cDNA clones from japonica rice.</title>
        <authorList>
            <consortium name="The rice full-length cDNA consortium"/>
        </authorList>
    </citation>
    <scope>NUCLEOTIDE SEQUENCE [LARGE SCALE MRNA]</scope>
    <source>
        <strain>cv. Nipponbare</strain>
    </source>
</reference>
<reference key="7">
    <citation type="journal article" date="2009" name="Nat. Cell Biol.">
        <title>OsHAL3 mediates a new pathway in the light-regulated growth of rice.</title>
        <authorList>
            <person name="Sun S.Y."/>
            <person name="Chao D.Y."/>
            <person name="Li X.M."/>
            <person name="Shi M."/>
            <person name="Gao J.P."/>
            <person name="Zhu M.Z."/>
            <person name="Yang H.Q."/>
            <person name="Luan S."/>
            <person name="Lin H.X."/>
        </authorList>
    </citation>
    <scope>FUNCTION</scope>
    <scope>INTERACTION WITH HAL3</scope>
    <scope>INDUCTION BY PANTOTHENATE</scope>
</reference>
<organism>
    <name type="scientific">Oryza sativa subsp. japonica</name>
    <name type="common">Rice</name>
    <dbReference type="NCBI Taxonomy" id="39947"/>
    <lineage>
        <taxon>Eukaryota</taxon>
        <taxon>Viridiplantae</taxon>
        <taxon>Streptophyta</taxon>
        <taxon>Embryophyta</taxon>
        <taxon>Tracheophyta</taxon>
        <taxon>Spermatophyta</taxon>
        <taxon>Magnoliopsida</taxon>
        <taxon>Liliopsida</taxon>
        <taxon>Poales</taxon>
        <taxon>Poaceae</taxon>
        <taxon>BOP clade</taxon>
        <taxon>Oryzoideae</taxon>
        <taxon>Oryzeae</taxon>
        <taxon>Oryzinae</taxon>
        <taxon>Oryza</taxon>
        <taxon>Oryza sativa</taxon>
    </lineage>
</organism>
<evidence type="ECO:0000250" key="1"/>
<evidence type="ECO:0000255" key="2">
    <source>
        <dbReference type="PROSITE-ProRule" id="PRU00175"/>
    </source>
</evidence>
<evidence type="ECO:0000256" key="3">
    <source>
        <dbReference type="SAM" id="MobiDB-lite"/>
    </source>
</evidence>
<evidence type="ECO:0000269" key="4">
    <source>
    </source>
</evidence>
<evidence type="ECO:0000305" key="5"/>
<name>HIP1_ORYSJ</name>
<feature type="chain" id="PRO_0000429415" description="Probable E3 ubiquitin-protein ligase HIP1">
    <location>
        <begin position="1"/>
        <end position="667"/>
    </location>
</feature>
<feature type="zinc finger region" description="RING-type; atypical" evidence="2">
    <location>
        <begin position="620"/>
        <end position="661"/>
    </location>
</feature>
<feature type="region of interest" description="Disordered" evidence="3">
    <location>
        <begin position="142"/>
        <end position="163"/>
    </location>
</feature>
<feature type="region of interest" description="Disordered" evidence="3">
    <location>
        <begin position="285"/>
        <end position="311"/>
    </location>
</feature>
<feature type="compositionally biased region" description="Low complexity" evidence="3">
    <location>
        <begin position="288"/>
        <end position="309"/>
    </location>
</feature>
<comment type="function">
    <text evidence="4">Probable E3 ubiquitin-protein ligase that functions downstream of HAL3 and is required for HAL3-regulated plant growth. Activation of HIP1 by HAL3 may lead to the degradation of cell cycle suppressors, resulting in enhancement of cell division and plant growth.</text>
</comment>
<comment type="catalytic activity">
    <reaction>
        <text>S-ubiquitinyl-[E2 ubiquitin-conjugating enzyme]-L-cysteine + [acceptor protein]-L-lysine = [E2 ubiquitin-conjugating enzyme]-L-cysteine + N(6)-ubiquitinyl-[acceptor protein]-L-lysine.</text>
        <dbReference type="EC" id="2.3.2.27"/>
    </reaction>
</comment>
<comment type="pathway">
    <text>Protein modification; protein ubiquitination.</text>
</comment>
<comment type="subunit">
    <text evidence="4">Interacts with HAL3.</text>
</comment>
<comment type="induction">
    <text evidence="4">By pantothenate.</text>
</comment>
<comment type="domain">
    <text evidence="1">The RING-type zinc finger domain mediates binding to an E2 ubiquitin-conjugating enzyme.</text>
</comment>
<comment type="similarity">
    <text evidence="5">Belongs to the RING-type zinc finger family.</text>
</comment>
<comment type="sequence caution" evidence="5">
    <conflict type="erroneous gene model prediction">
        <sequence resource="EMBL-CDS" id="BAH92849"/>
    </conflict>
</comment>
<dbReference type="EC" id="2.3.2.27"/>
<dbReference type="EMBL" id="AL606635">
    <property type="protein sequence ID" value="CAD41707.2"/>
    <property type="molecule type" value="Genomic_DNA"/>
</dbReference>
<dbReference type="EMBL" id="AP008210">
    <property type="protein sequence ID" value="BAH92849.1"/>
    <property type="status" value="ALT_SEQ"/>
    <property type="molecule type" value="Genomic_DNA"/>
</dbReference>
<dbReference type="EMBL" id="AP014960">
    <property type="protein sequence ID" value="BAS91331.1"/>
    <property type="molecule type" value="Genomic_DNA"/>
</dbReference>
<dbReference type="EMBL" id="CM000141">
    <property type="protein sequence ID" value="EAZ32210.1"/>
    <property type="molecule type" value="Genomic_DNA"/>
</dbReference>
<dbReference type="EMBL" id="AK071468">
    <property type="protein sequence ID" value="BAG92508.1"/>
    <property type="molecule type" value="mRNA"/>
</dbReference>
<dbReference type="RefSeq" id="XP_015636255.1">
    <property type="nucleotide sequence ID" value="XM_015780769.1"/>
</dbReference>
<dbReference type="SMR" id="Q7XTV7"/>
<dbReference type="FunCoup" id="Q7XTV7">
    <property type="interactions" value="839"/>
</dbReference>
<dbReference type="STRING" id="39947.Q7XTV7"/>
<dbReference type="PaxDb" id="39947-Q7XTV7"/>
<dbReference type="EnsemblPlants" id="Os04t0648800-01">
    <property type="protein sequence ID" value="Os04t0648800-01"/>
    <property type="gene ID" value="Os04g0648800"/>
</dbReference>
<dbReference type="Gramene" id="Os04t0648800-01">
    <property type="protein sequence ID" value="Os04t0648800-01"/>
    <property type="gene ID" value="Os04g0648800"/>
</dbReference>
<dbReference type="KEGG" id="dosa:Os04g0648800"/>
<dbReference type="eggNOG" id="KOG0800">
    <property type="taxonomic scope" value="Eukaryota"/>
</dbReference>
<dbReference type="HOGENOM" id="CLU_024479_0_0_1"/>
<dbReference type="InParanoid" id="Q7XTV7"/>
<dbReference type="OMA" id="NANCASQ"/>
<dbReference type="OrthoDB" id="8062037at2759"/>
<dbReference type="UniPathway" id="UPA00143"/>
<dbReference type="Proteomes" id="UP000000763">
    <property type="component" value="Chromosome 4"/>
</dbReference>
<dbReference type="Proteomes" id="UP000007752">
    <property type="component" value="Chromosome 4"/>
</dbReference>
<dbReference type="Proteomes" id="UP000059680">
    <property type="component" value="Chromosome 4"/>
</dbReference>
<dbReference type="ExpressionAtlas" id="Q7XTV7">
    <property type="expression patterns" value="baseline and differential"/>
</dbReference>
<dbReference type="GO" id="GO:0061630">
    <property type="term" value="F:ubiquitin protein ligase activity"/>
    <property type="evidence" value="ECO:0000318"/>
    <property type="project" value="GO_Central"/>
</dbReference>
<dbReference type="GO" id="GO:0008270">
    <property type="term" value="F:zinc ion binding"/>
    <property type="evidence" value="ECO:0007669"/>
    <property type="project" value="UniProtKB-KW"/>
</dbReference>
<dbReference type="GO" id="GO:0016567">
    <property type="term" value="P:protein ubiquitination"/>
    <property type="evidence" value="ECO:0007669"/>
    <property type="project" value="UniProtKB-UniPathway"/>
</dbReference>
<dbReference type="FunFam" id="3.30.40.10:FF:000309">
    <property type="entry name" value="E3 ubiquitin-protein ligase MBR2"/>
    <property type="match status" value="1"/>
</dbReference>
<dbReference type="Gene3D" id="3.30.40.10">
    <property type="entry name" value="Zinc/RING finger domain, C3HC4 (zinc finger)"/>
    <property type="match status" value="1"/>
</dbReference>
<dbReference type="InterPro" id="IPR045191">
    <property type="entry name" value="MBR1/2-like"/>
</dbReference>
<dbReference type="InterPro" id="IPR001841">
    <property type="entry name" value="Znf_RING"/>
</dbReference>
<dbReference type="InterPro" id="IPR013083">
    <property type="entry name" value="Znf_RING/FYVE/PHD"/>
</dbReference>
<dbReference type="PANTHER" id="PTHR22937:SF224">
    <property type="entry name" value="E3 UBIQUITIN-PROTEIN LIGASE MBR1-RELATED"/>
    <property type="match status" value="1"/>
</dbReference>
<dbReference type="PANTHER" id="PTHR22937">
    <property type="entry name" value="E3 UBIQUITIN-PROTEIN LIGASE RNF165"/>
    <property type="match status" value="1"/>
</dbReference>
<dbReference type="Pfam" id="PF13639">
    <property type="entry name" value="zf-RING_2"/>
    <property type="match status" value="1"/>
</dbReference>
<dbReference type="SMART" id="SM00184">
    <property type="entry name" value="RING"/>
    <property type="match status" value="1"/>
</dbReference>
<dbReference type="SUPFAM" id="SSF57850">
    <property type="entry name" value="RING/U-box"/>
    <property type="match status" value="1"/>
</dbReference>
<dbReference type="PROSITE" id="PS50089">
    <property type="entry name" value="ZF_RING_2"/>
    <property type="match status" value="1"/>
</dbReference>
<gene>
    <name type="primary">HIP1</name>
    <name type="ordered locus">Os04g0648800</name>
    <name type="ordered locus">LOC_Os04g55510</name>
    <name type="ORF">OsJ_16417</name>
    <name type="ORF">OSJNBa0010D21.9</name>
</gene>
<sequence length="667" mass="72641">MQGQKNSVEQLADVFGFDHASSSGNPVMDQQGYWNNILGSVESHNLQGYQVNRSDGTIPYGNGVHQNGTFLGFWESGEASASGSSLHFGGSNEIKAEQRNIGGGLRIGERRLVAERNLSLDNVDIGLNINGNDLSGENSNVNGASQGSELHGGCSHTGSNGQASELRLHPYRTFILGADQPEPFNSLNGSENPLGDFSLMPEGIDQRPGSSLDGRRLACKRKNIEGVNGQCSAGASTSFSHRNDSIFHNIASSSHNPSPSTNLPSPNCLLVPSTLDEQLPRYGATTAGLSSSSYDPSGGNNNSGGSQRSFRPRTSLAQHIGPYGVWPSSSTIRHSNSWNHQPPPFQSSFDEPPEVIPVVSSLNFQYQHPMNVVPGIPQMSHRFTGPGASSSRTGNLENRIIGSEEFSARNVVATSFPDAVPPAALDMRHLIPEPSSWNVDGRATTIPGNVPSSSRANTNSMVNPPAGSPFIAHQNLHRRNPRNLSEEISRLSGALRGHQHPRLRSGFLLERQGDGVWGVPLSTRSREGRRLIEIRNALEMIHRGENVRFESIFYGGVDIHDRHRDMRLDIDNMSYEELLALEERIGNVSTGLSEEEVTKLLKQRKFSSWRLEASVEEEPCCICQEEYVDGDDLGTLDCGHDFHVGCVRQWLVVKNTCPICKNTALKS</sequence>
<proteinExistence type="evidence at protein level"/>
<accession>Q7XTV7</accession>
<accession>A0A0P0WFQ0</accession>
<accession>C7J171</accession>
<keyword id="KW-0341">Growth regulation</keyword>
<keyword id="KW-0479">Metal-binding</keyword>
<keyword id="KW-1185">Reference proteome</keyword>
<keyword id="KW-0808">Transferase</keyword>
<keyword id="KW-0833">Ubl conjugation pathway</keyword>
<keyword id="KW-0862">Zinc</keyword>
<keyword id="KW-0863">Zinc-finger</keyword>